<gene>
    <name type="primary">uck2b</name>
    <name type="ORF">si:ch211-284b7.4</name>
    <name type="ORF">zgc:56174</name>
</gene>
<proteinExistence type="evidence at transcript level"/>
<name>UCK2B_DANRE</name>
<reference key="1">
    <citation type="journal article" date="2013" name="Nature">
        <title>The zebrafish reference genome sequence and its relationship to the human genome.</title>
        <authorList>
            <person name="Howe K."/>
            <person name="Clark M.D."/>
            <person name="Torroja C.F."/>
            <person name="Torrance J."/>
            <person name="Berthelot C."/>
            <person name="Muffato M."/>
            <person name="Collins J.E."/>
            <person name="Humphray S."/>
            <person name="McLaren K."/>
            <person name="Matthews L."/>
            <person name="McLaren S."/>
            <person name="Sealy I."/>
            <person name="Caccamo M."/>
            <person name="Churcher C."/>
            <person name="Scott C."/>
            <person name="Barrett J.C."/>
            <person name="Koch R."/>
            <person name="Rauch G.J."/>
            <person name="White S."/>
            <person name="Chow W."/>
            <person name="Kilian B."/>
            <person name="Quintais L.T."/>
            <person name="Guerra-Assuncao J.A."/>
            <person name="Zhou Y."/>
            <person name="Gu Y."/>
            <person name="Yen J."/>
            <person name="Vogel J.H."/>
            <person name="Eyre T."/>
            <person name="Redmond S."/>
            <person name="Banerjee R."/>
            <person name="Chi J."/>
            <person name="Fu B."/>
            <person name="Langley E."/>
            <person name="Maguire S.F."/>
            <person name="Laird G.K."/>
            <person name="Lloyd D."/>
            <person name="Kenyon E."/>
            <person name="Donaldson S."/>
            <person name="Sehra H."/>
            <person name="Almeida-King J."/>
            <person name="Loveland J."/>
            <person name="Trevanion S."/>
            <person name="Jones M."/>
            <person name="Quail M."/>
            <person name="Willey D."/>
            <person name="Hunt A."/>
            <person name="Burton J."/>
            <person name="Sims S."/>
            <person name="McLay K."/>
            <person name="Plumb B."/>
            <person name="Davis J."/>
            <person name="Clee C."/>
            <person name="Oliver K."/>
            <person name="Clark R."/>
            <person name="Riddle C."/>
            <person name="Elliot D."/>
            <person name="Threadgold G."/>
            <person name="Harden G."/>
            <person name="Ware D."/>
            <person name="Begum S."/>
            <person name="Mortimore B."/>
            <person name="Kerry G."/>
            <person name="Heath P."/>
            <person name="Phillimore B."/>
            <person name="Tracey A."/>
            <person name="Corby N."/>
            <person name="Dunn M."/>
            <person name="Johnson C."/>
            <person name="Wood J."/>
            <person name="Clark S."/>
            <person name="Pelan S."/>
            <person name="Griffiths G."/>
            <person name="Smith M."/>
            <person name="Glithero R."/>
            <person name="Howden P."/>
            <person name="Barker N."/>
            <person name="Lloyd C."/>
            <person name="Stevens C."/>
            <person name="Harley J."/>
            <person name="Holt K."/>
            <person name="Panagiotidis G."/>
            <person name="Lovell J."/>
            <person name="Beasley H."/>
            <person name="Henderson C."/>
            <person name="Gordon D."/>
            <person name="Auger K."/>
            <person name="Wright D."/>
            <person name="Collins J."/>
            <person name="Raisen C."/>
            <person name="Dyer L."/>
            <person name="Leung K."/>
            <person name="Robertson L."/>
            <person name="Ambridge K."/>
            <person name="Leongamornlert D."/>
            <person name="McGuire S."/>
            <person name="Gilderthorp R."/>
            <person name="Griffiths C."/>
            <person name="Manthravadi D."/>
            <person name="Nichol S."/>
            <person name="Barker G."/>
            <person name="Whitehead S."/>
            <person name="Kay M."/>
            <person name="Brown J."/>
            <person name="Murnane C."/>
            <person name="Gray E."/>
            <person name="Humphries M."/>
            <person name="Sycamore N."/>
            <person name="Barker D."/>
            <person name="Saunders D."/>
            <person name="Wallis J."/>
            <person name="Babbage A."/>
            <person name="Hammond S."/>
            <person name="Mashreghi-Mohammadi M."/>
            <person name="Barr L."/>
            <person name="Martin S."/>
            <person name="Wray P."/>
            <person name="Ellington A."/>
            <person name="Matthews N."/>
            <person name="Ellwood M."/>
            <person name="Woodmansey R."/>
            <person name="Clark G."/>
            <person name="Cooper J."/>
            <person name="Tromans A."/>
            <person name="Grafham D."/>
            <person name="Skuce C."/>
            <person name="Pandian R."/>
            <person name="Andrews R."/>
            <person name="Harrison E."/>
            <person name="Kimberley A."/>
            <person name="Garnett J."/>
            <person name="Fosker N."/>
            <person name="Hall R."/>
            <person name="Garner P."/>
            <person name="Kelly D."/>
            <person name="Bird C."/>
            <person name="Palmer S."/>
            <person name="Gehring I."/>
            <person name="Berger A."/>
            <person name="Dooley C.M."/>
            <person name="Ersan-Urun Z."/>
            <person name="Eser C."/>
            <person name="Geiger H."/>
            <person name="Geisler M."/>
            <person name="Karotki L."/>
            <person name="Kirn A."/>
            <person name="Konantz J."/>
            <person name="Konantz M."/>
            <person name="Oberlander M."/>
            <person name="Rudolph-Geiger S."/>
            <person name="Teucke M."/>
            <person name="Lanz C."/>
            <person name="Raddatz G."/>
            <person name="Osoegawa K."/>
            <person name="Zhu B."/>
            <person name="Rapp A."/>
            <person name="Widaa S."/>
            <person name="Langford C."/>
            <person name="Yang F."/>
            <person name="Schuster S.C."/>
            <person name="Carter N.P."/>
            <person name="Harrow J."/>
            <person name="Ning Z."/>
            <person name="Herrero J."/>
            <person name="Searle S.M."/>
            <person name="Enright A."/>
            <person name="Geisler R."/>
            <person name="Plasterk R.H."/>
            <person name="Lee C."/>
            <person name="Westerfield M."/>
            <person name="de Jong P.J."/>
            <person name="Zon L.I."/>
            <person name="Postlethwait J.H."/>
            <person name="Nusslein-Volhard C."/>
            <person name="Hubbard T.J."/>
            <person name="Roest Crollius H."/>
            <person name="Rogers J."/>
            <person name="Stemple D.L."/>
        </authorList>
    </citation>
    <scope>NUCLEOTIDE SEQUENCE [LARGE SCALE GENOMIC DNA]</scope>
    <source>
        <strain>Tuebingen</strain>
    </source>
</reference>
<reference key="2">
    <citation type="submission" date="2003-01" db="EMBL/GenBank/DDBJ databases">
        <authorList>
            <consortium name="NIH - Zebrafish Gene Collection (ZGC) project"/>
        </authorList>
    </citation>
    <scope>NUCLEOTIDE SEQUENCE [LARGE SCALE MRNA]</scope>
</reference>
<dbReference type="EC" id="2.7.1.48" evidence="1"/>
<dbReference type="EMBL" id="AL954171">
    <property type="protein sequence ID" value="CAM14217.1"/>
    <property type="molecule type" value="Genomic_DNA"/>
</dbReference>
<dbReference type="EMBL" id="BC045968">
    <property type="protein sequence ID" value="AAH45968.1"/>
    <property type="molecule type" value="mRNA"/>
</dbReference>
<dbReference type="RefSeq" id="NP_956058.1">
    <property type="nucleotide sequence ID" value="NM_199764.2"/>
</dbReference>
<dbReference type="SMR" id="Q7ZV79"/>
<dbReference type="FunCoup" id="Q7ZV79">
    <property type="interactions" value="350"/>
</dbReference>
<dbReference type="STRING" id="7955.ENSDARP00000033495"/>
<dbReference type="PaxDb" id="7955-ENSDARP00000033495"/>
<dbReference type="Ensembl" id="ENSDART00000037698">
    <property type="protein sequence ID" value="ENSDARP00000033495"/>
    <property type="gene ID" value="ENSDARG00000022213"/>
</dbReference>
<dbReference type="GeneID" id="327057"/>
<dbReference type="KEGG" id="dre:327057"/>
<dbReference type="AGR" id="ZFIN:ZDB-GENE-030131-5265"/>
<dbReference type="CTD" id="327057"/>
<dbReference type="ZFIN" id="ZDB-GENE-030131-5265">
    <property type="gene designation" value="uck2b"/>
</dbReference>
<dbReference type="eggNOG" id="KOG4203">
    <property type="taxonomic scope" value="Eukaryota"/>
</dbReference>
<dbReference type="HOGENOM" id="CLU_021278_1_1_1"/>
<dbReference type="InParanoid" id="Q7ZV79"/>
<dbReference type="OMA" id="NICKNRM"/>
<dbReference type="OrthoDB" id="10257085at2759"/>
<dbReference type="PhylomeDB" id="Q7ZV79"/>
<dbReference type="TreeFam" id="TF316686"/>
<dbReference type="UniPathway" id="UPA00574">
    <property type="reaction ID" value="UER00637"/>
</dbReference>
<dbReference type="UniPathway" id="UPA00579">
    <property type="reaction ID" value="UER00640"/>
</dbReference>
<dbReference type="PRO" id="PR:Q7ZV79"/>
<dbReference type="Proteomes" id="UP000000437">
    <property type="component" value="Chromosome 2"/>
</dbReference>
<dbReference type="Bgee" id="ENSDARG00000022213">
    <property type="expression patterns" value="Expressed in mature ovarian follicle and 28 other cell types or tissues"/>
</dbReference>
<dbReference type="ExpressionAtlas" id="Q7ZV79">
    <property type="expression patterns" value="baseline"/>
</dbReference>
<dbReference type="GO" id="GO:0005737">
    <property type="term" value="C:cytoplasm"/>
    <property type="evidence" value="ECO:0000318"/>
    <property type="project" value="GO_Central"/>
</dbReference>
<dbReference type="GO" id="GO:0005524">
    <property type="term" value="F:ATP binding"/>
    <property type="evidence" value="ECO:0007669"/>
    <property type="project" value="UniProtKB-KW"/>
</dbReference>
<dbReference type="GO" id="GO:0043771">
    <property type="term" value="F:cytidine kinase activity"/>
    <property type="evidence" value="ECO:0000250"/>
    <property type="project" value="UniProtKB"/>
</dbReference>
<dbReference type="GO" id="GO:0004849">
    <property type="term" value="F:uridine kinase activity"/>
    <property type="evidence" value="ECO:0000250"/>
    <property type="project" value="UniProtKB"/>
</dbReference>
<dbReference type="GO" id="GO:0044211">
    <property type="term" value="P:CTP salvage"/>
    <property type="evidence" value="ECO:0000250"/>
    <property type="project" value="UniProtKB"/>
</dbReference>
<dbReference type="GO" id="GO:0044206">
    <property type="term" value="P:UMP salvage"/>
    <property type="evidence" value="ECO:0000250"/>
    <property type="project" value="UniProtKB"/>
</dbReference>
<dbReference type="CDD" id="cd02023">
    <property type="entry name" value="UMPK"/>
    <property type="match status" value="1"/>
</dbReference>
<dbReference type="FunFam" id="3.40.50.300:FF:000297">
    <property type="entry name" value="Uridine-cytidine kinase 2"/>
    <property type="match status" value="1"/>
</dbReference>
<dbReference type="Gene3D" id="3.40.50.300">
    <property type="entry name" value="P-loop containing nucleotide triphosphate hydrolases"/>
    <property type="match status" value="1"/>
</dbReference>
<dbReference type="InterPro" id="IPR027417">
    <property type="entry name" value="P-loop_NTPase"/>
</dbReference>
<dbReference type="InterPro" id="IPR006083">
    <property type="entry name" value="PRK/URK"/>
</dbReference>
<dbReference type="InterPro" id="IPR000764">
    <property type="entry name" value="Uridine_kinase-like"/>
</dbReference>
<dbReference type="NCBIfam" id="NF004018">
    <property type="entry name" value="PRK05480.1"/>
    <property type="match status" value="1"/>
</dbReference>
<dbReference type="NCBIfam" id="TIGR00235">
    <property type="entry name" value="udk"/>
    <property type="match status" value="1"/>
</dbReference>
<dbReference type="PANTHER" id="PTHR10285">
    <property type="entry name" value="URIDINE KINASE"/>
    <property type="match status" value="1"/>
</dbReference>
<dbReference type="Pfam" id="PF00485">
    <property type="entry name" value="PRK"/>
    <property type="match status" value="1"/>
</dbReference>
<dbReference type="PRINTS" id="PR00988">
    <property type="entry name" value="URIDINKINASE"/>
</dbReference>
<dbReference type="SUPFAM" id="SSF52540">
    <property type="entry name" value="P-loop containing nucleoside triphosphate hydrolases"/>
    <property type="match status" value="1"/>
</dbReference>
<keyword id="KW-0067">ATP-binding</keyword>
<keyword id="KW-0418">Kinase</keyword>
<keyword id="KW-0547">Nucleotide-binding</keyword>
<keyword id="KW-1185">Reference proteome</keyword>
<keyword id="KW-0808">Transferase</keyword>
<feature type="chain" id="PRO_0000346105" description="Uridine-cytidine kinase 2-B">
    <location>
        <begin position="1"/>
        <end position="261"/>
    </location>
</feature>
<feature type="region of interest" description="Disordered" evidence="2">
    <location>
        <begin position="238"/>
        <end position="261"/>
    </location>
</feature>
<feature type="binding site" evidence="1">
    <location>
        <begin position="29"/>
        <end position="37"/>
    </location>
    <ligand>
        <name>ATP</name>
        <dbReference type="ChEBI" id="CHEBI:30616"/>
    </ligand>
</feature>
<feature type="binding site" evidence="1">
    <location>
        <position position="86"/>
    </location>
    <ligand>
        <name>substrate</name>
    </ligand>
</feature>
<feature type="binding site" evidence="1">
    <location>
        <position position="114"/>
    </location>
    <ligand>
        <name>substrate</name>
    </ligand>
</feature>
<feature type="binding site" evidence="1">
    <location>
        <position position="119"/>
    </location>
    <ligand>
        <name>substrate</name>
    </ligand>
</feature>
<feature type="binding site" evidence="1">
    <location>
        <position position="168"/>
    </location>
    <ligand>
        <name>substrate</name>
    </ligand>
</feature>
<feature type="binding site" evidence="1">
    <location>
        <position position="178"/>
    </location>
    <ligand>
        <name>substrate</name>
    </ligand>
</feature>
<feature type="binding site" evidence="1">
    <location>
        <position position="186"/>
    </location>
    <ligand>
        <name>substrate</name>
    </ligand>
</feature>
<feature type="binding site" evidence="1">
    <location>
        <position position="215"/>
    </location>
    <ligand>
        <name>ATP</name>
        <dbReference type="ChEBI" id="CHEBI:30616"/>
    </ligand>
</feature>
<accession>Q7ZV79</accession>
<comment type="function">
    <text evidence="1">Phosphorylates uridine and cytidine to uridine monophosphate and cytidine monophosphate. Does not phosphorylate deoxyribonucleosides or purine ribonucleosides. Can use ATP or GTP as a phosphate donor.</text>
</comment>
<comment type="catalytic activity">
    <reaction evidence="1">
        <text>uridine + ATP = UMP + ADP + H(+)</text>
        <dbReference type="Rhea" id="RHEA:16825"/>
        <dbReference type="ChEBI" id="CHEBI:15378"/>
        <dbReference type="ChEBI" id="CHEBI:16704"/>
        <dbReference type="ChEBI" id="CHEBI:30616"/>
        <dbReference type="ChEBI" id="CHEBI:57865"/>
        <dbReference type="ChEBI" id="CHEBI:456216"/>
        <dbReference type="EC" id="2.7.1.48"/>
    </reaction>
</comment>
<comment type="catalytic activity">
    <reaction evidence="1">
        <text>cytidine + ATP = CMP + ADP + H(+)</text>
        <dbReference type="Rhea" id="RHEA:24674"/>
        <dbReference type="ChEBI" id="CHEBI:15378"/>
        <dbReference type="ChEBI" id="CHEBI:17562"/>
        <dbReference type="ChEBI" id="CHEBI:30616"/>
        <dbReference type="ChEBI" id="CHEBI:60377"/>
        <dbReference type="ChEBI" id="CHEBI:456216"/>
        <dbReference type="EC" id="2.7.1.48"/>
    </reaction>
</comment>
<comment type="pathway">
    <text evidence="1">Pyrimidine metabolism; CTP biosynthesis via salvage pathway; CTP from cytidine: step 1/3.</text>
</comment>
<comment type="pathway">
    <text evidence="1">Pyrimidine metabolism; UMP biosynthesis via salvage pathway; UMP from uridine: step 1/1.</text>
</comment>
<comment type="subunit">
    <text evidence="1">Homotetramer.</text>
</comment>
<comment type="similarity">
    <text evidence="3">Belongs to the uridine kinase family.</text>
</comment>
<protein>
    <recommendedName>
        <fullName>Uridine-cytidine kinase 2-B</fullName>
        <shortName>UCK 2-B</shortName>
        <ecNumber evidence="1">2.7.1.48</ecNumber>
    </recommendedName>
    <alternativeName>
        <fullName>Cytidine monophosphokinase 2-B</fullName>
    </alternativeName>
    <alternativeName>
        <fullName>Uridine monophosphokinase 2-B</fullName>
    </alternativeName>
</protein>
<organism>
    <name type="scientific">Danio rerio</name>
    <name type="common">Zebrafish</name>
    <name type="synonym">Brachydanio rerio</name>
    <dbReference type="NCBI Taxonomy" id="7955"/>
    <lineage>
        <taxon>Eukaryota</taxon>
        <taxon>Metazoa</taxon>
        <taxon>Chordata</taxon>
        <taxon>Craniata</taxon>
        <taxon>Vertebrata</taxon>
        <taxon>Euteleostomi</taxon>
        <taxon>Actinopterygii</taxon>
        <taxon>Neopterygii</taxon>
        <taxon>Teleostei</taxon>
        <taxon>Ostariophysi</taxon>
        <taxon>Cypriniformes</taxon>
        <taxon>Danionidae</taxon>
        <taxon>Danioninae</taxon>
        <taxon>Danio</taxon>
    </lineage>
</organism>
<evidence type="ECO:0000250" key="1">
    <source>
        <dbReference type="UniProtKB" id="Q9BZX2"/>
    </source>
</evidence>
<evidence type="ECO:0000256" key="2">
    <source>
        <dbReference type="SAM" id="MobiDB-lite"/>
    </source>
</evidence>
<evidence type="ECO:0000305" key="3"/>
<sequence length="261" mass="29876">MAGDSETHLKDRAENGHAVRQPFLIGVSGGTASGKSSVCEKIMELLGQNKIDRHQRQVVILSQDSFYRELTPEQKAKAVKGQFNFDHPDAFDSELIMKTLRDIIQGKTVHIPVYDFVTHSRKDEFLTLYPADVVLFEGILMFYSQEIRDLFKMKLFVDTDPDTRLSRRVLRDISERGRELEQVLNQYITFVKPAFEEFCLPTKKYADVIIPRGADNLVAINLIVQHIQDILNGGFTKRQNGFQNGHGTPRQRRTSESSRPH</sequence>